<name>CYB_ISOMA</name>
<organism>
    <name type="scientific">Isoodon macrourus</name>
    <name type="common">Short-nosed bandicoot</name>
    <name type="synonym">Northern brown bandicoot</name>
    <dbReference type="NCBI Taxonomy" id="37698"/>
    <lineage>
        <taxon>Eukaryota</taxon>
        <taxon>Metazoa</taxon>
        <taxon>Chordata</taxon>
        <taxon>Craniata</taxon>
        <taxon>Vertebrata</taxon>
        <taxon>Euteleostomi</taxon>
        <taxon>Mammalia</taxon>
        <taxon>Metatheria</taxon>
        <taxon>Peramelemorphia</taxon>
        <taxon>Peramelidae</taxon>
        <taxon>Isoodon</taxon>
    </lineage>
</organism>
<geneLocation type="mitochondrion"/>
<sequence>MTNLRKTHPLMKIINDAFIDLPAPSNISAWWNFGSLLGICLIIQILTGLFLAMHYTSDTLTAFSSVAHICRDVNYGWLIRNLHANGASMFFMCLFLHVGRGIYYGSYLFKETWNIGVILLLTVMATAFVGYVLPWGQMSFWGATVITNLLSAIPYIGTTLVEWIWGGFSVDKATLTRFFAFHFILPFIVTAMVIVHLLFLHETGSNNPSGLNPDSDKIPFHPYYTIKDALGLLLMVLLLLLLAMFSPDMLGDPDNFSPANPLNTPPHIKPEWYFLFAYAILRSIPNKLGGVLALLMSILVLLIIPLLHTSKQRSLMFRPISQILFWLLAADLFTLTWIGGQPVEQPFIIIGQVASILYFLLIIALMPLAGLLENYMLKPKW</sequence>
<dbReference type="EMBL" id="AF358864">
    <property type="protein sequence ID" value="AAK38293.1"/>
    <property type="molecule type" value="Genomic_DNA"/>
</dbReference>
<dbReference type="RefSeq" id="NP_112663.1">
    <property type="nucleotide sequence ID" value="NC_002746.1"/>
</dbReference>
<dbReference type="SMR" id="Q9B2F7"/>
<dbReference type="GeneID" id="803005"/>
<dbReference type="CTD" id="4519"/>
<dbReference type="GO" id="GO:0005743">
    <property type="term" value="C:mitochondrial inner membrane"/>
    <property type="evidence" value="ECO:0007669"/>
    <property type="project" value="UniProtKB-SubCell"/>
</dbReference>
<dbReference type="GO" id="GO:0045275">
    <property type="term" value="C:respiratory chain complex III"/>
    <property type="evidence" value="ECO:0007669"/>
    <property type="project" value="InterPro"/>
</dbReference>
<dbReference type="GO" id="GO:0046872">
    <property type="term" value="F:metal ion binding"/>
    <property type="evidence" value="ECO:0007669"/>
    <property type="project" value="UniProtKB-KW"/>
</dbReference>
<dbReference type="GO" id="GO:0008121">
    <property type="term" value="F:ubiquinol-cytochrome-c reductase activity"/>
    <property type="evidence" value="ECO:0007669"/>
    <property type="project" value="InterPro"/>
</dbReference>
<dbReference type="GO" id="GO:0006122">
    <property type="term" value="P:mitochondrial electron transport, ubiquinol to cytochrome c"/>
    <property type="evidence" value="ECO:0007669"/>
    <property type="project" value="TreeGrafter"/>
</dbReference>
<dbReference type="CDD" id="cd00290">
    <property type="entry name" value="cytochrome_b_C"/>
    <property type="match status" value="1"/>
</dbReference>
<dbReference type="CDD" id="cd00284">
    <property type="entry name" value="Cytochrome_b_N"/>
    <property type="match status" value="1"/>
</dbReference>
<dbReference type="FunFam" id="1.20.810.10:FF:000002">
    <property type="entry name" value="Cytochrome b"/>
    <property type="match status" value="1"/>
</dbReference>
<dbReference type="Gene3D" id="1.20.810.10">
    <property type="entry name" value="Cytochrome Bc1 Complex, Chain C"/>
    <property type="match status" value="1"/>
</dbReference>
<dbReference type="InterPro" id="IPR005798">
    <property type="entry name" value="Cyt_b/b6_C"/>
</dbReference>
<dbReference type="InterPro" id="IPR036150">
    <property type="entry name" value="Cyt_b/b6_C_sf"/>
</dbReference>
<dbReference type="InterPro" id="IPR005797">
    <property type="entry name" value="Cyt_b/b6_N"/>
</dbReference>
<dbReference type="InterPro" id="IPR027387">
    <property type="entry name" value="Cytb/b6-like_sf"/>
</dbReference>
<dbReference type="InterPro" id="IPR030689">
    <property type="entry name" value="Cytochrome_b"/>
</dbReference>
<dbReference type="InterPro" id="IPR048260">
    <property type="entry name" value="Cytochrome_b_C_euk/bac"/>
</dbReference>
<dbReference type="InterPro" id="IPR048259">
    <property type="entry name" value="Cytochrome_b_N_euk/bac"/>
</dbReference>
<dbReference type="InterPro" id="IPR016174">
    <property type="entry name" value="Di-haem_cyt_TM"/>
</dbReference>
<dbReference type="PANTHER" id="PTHR19271">
    <property type="entry name" value="CYTOCHROME B"/>
    <property type="match status" value="1"/>
</dbReference>
<dbReference type="PANTHER" id="PTHR19271:SF16">
    <property type="entry name" value="CYTOCHROME B"/>
    <property type="match status" value="1"/>
</dbReference>
<dbReference type="Pfam" id="PF00032">
    <property type="entry name" value="Cytochrom_B_C"/>
    <property type="match status" value="1"/>
</dbReference>
<dbReference type="Pfam" id="PF00033">
    <property type="entry name" value="Cytochrome_B"/>
    <property type="match status" value="1"/>
</dbReference>
<dbReference type="PIRSF" id="PIRSF038885">
    <property type="entry name" value="COB"/>
    <property type="match status" value="1"/>
</dbReference>
<dbReference type="SUPFAM" id="SSF81648">
    <property type="entry name" value="a domain/subunit of cytochrome bc1 complex (Ubiquinol-cytochrome c reductase)"/>
    <property type="match status" value="1"/>
</dbReference>
<dbReference type="SUPFAM" id="SSF81342">
    <property type="entry name" value="Transmembrane di-heme cytochromes"/>
    <property type="match status" value="1"/>
</dbReference>
<dbReference type="PROSITE" id="PS51003">
    <property type="entry name" value="CYTB_CTER"/>
    <property type="match status" value="1"/>
</dbReference>
<dbReference type="PROSITE" id="PS51002">
    <property type="entry name" value="CYTB_NTER"/>
    <property type="match status" value="1"/>
</dbReference>
<comment type="function">
    <text evidence="2">Component of the ubiquinol-cytochrome c reductase complex (complex III or cytochrome b-c1 complex) that is part of the mitochondrial respiratory chain. The b-c1 complex mediates electron transfer from ubiquinol to cytochrome c. Contributes to the generation of a proton gradient across the mitochondrial membrane that is then used for ATP synthesis.</text>
</comment>
<comment type="cofactor">
    <cofactor evidence="2">
        <name>heme b</name>
        <dbReference type="ChEBI" id="CHEBI:60344"/>
    </cofactor>
    <text evidence="2">Binds 2 heme b groups non-covalently.</text>
</comment>
<comment type="subunit">
    <text evidence="2">The cytochrome bc1 complex contains 11 subunits: 3 respiratory subunits (MT-CYB, CYC1 and UQCRFS1), 2 core proteins (UQCRC1 and UQCRC2) and 6 low-molecular weight proteins (UQCRH/QCR6, UQCRB/QCR7, UQCRQ/QCR8, UQCR10/QCR9, UQCR11/QCR10 and a cleavage product of UQCRFS1). This cytochrome bc1 complex then forms a dimer.</text>
</comment>
<comment type="subcellular location">
    <subcellularLocation>
        <location evidence="2">Mitochondrion inner membrane</location>
        <topology evidence="2">Multi-pass membrane protein</topology>
    </subcellularLocation>
</comment>
<comment type="miscellaneous">
    <text evidence="1">Heme 1 (or BL or b562) is low-potential and absorbs at about 562 nm, and heme 2 (or BH or b566) is high-potential and absorbs at about 566 nm.</text>
</comment>
<comment type="similarity">
    <text evidence="3 4">Belongs to the cytochrome b family.</text>
</comment>
<comment type="caution">
    <text evidence="2">The full-length protein contains only eight transmembrane helices, not nine as predicted by bioinformatics tools.</text>
</comment>
<accession>Q9B2F7</accession>
<reference key="1">
    <citation type="journal article" date="2001" name="Proc. R. Soc. B">
        <title>Mitochondrial genomes of a bandicoot and a brushtail possum confirm the monophyly of australidelphian marsupials.</title>
        <authorList>
            <person name="Phillips M.J."/>
            <person name="Lin Y.-H."/>
            <person name="Harrison G.L."/>
            <person name="Penny D."/>
        </authorList>
    </citation>
    <scope>NUCLEOTIDE SEQUENCE [GENOMIC DNA]</scope>
</reference>
<evidence type="ECO:0000250" key="1"/>
<evidence type="ECO:0000250" key="2">
    <source>
        <dbReference type="UniProtKB" id="P00157"/>
    </source>
</evidence>
<evidence type="ECO:0000255" key="3">
    <source>
        <dbReference type="PROSITE-ProRule" id="PRU00967"/>
    </source>
</evidence>
<evidence type="ECO:0000255" key="4">
    <source>
        <dbReference type="PROSITE-ProRule" id="PRU00968"/>
    </source>
</evidence>
<gene>
    <name type="primary">MT-CYB</name>
    <name type="synonym">COB</name>
    <name type="synonym">CYTB</name>
    <name type="synonym">MTCYB</name>
</gene>
<protein>
    <recommendedName>
        <fullName>Cytochrome b</fullName>
    </recommendedName>
    <alternativeName>
        <fullName>Complex III subunit 3</fullName>
    </alternativeName>
    <alternativeName>
        <fullName>Complex III subunit III</fullName>
    </alternativeName>
    <alternativeName>
        <fullName>Cytochrome b-c1 complex subunit 3</fullName>
    </alternativeName>
    <alternativeName>
        <fullName>Ubiquinol-cytochrome-c reductase complex cytochrome b subunit</fullName>
    </alternativeName>
</protein>
<keyword id="KW-0249">Electron transport</keyword>
<keyword id="KW-0349">Heme</keyword>
<keyword id="KW-0408">Iron</keyword>
<keyword id="KW-0472">Membrane</keyword>
<keyword id="KW-0479">Metal-binding</keyword>
<keyword id="KW-0496">Mitochondrion</keyword>
<keyword id="KW-0999">Mitochondrion inner membrane</keyword>
<keyword id="KW-0679">Respiratory chain</keyword>
<keyword id="KW-0812">Transmembrane</keyword>
<keyword id="KW-1133">Transmembrane helix</keyword>
<keyword id="KW-0813">Transport</keyword>
<keyword id="KW-0830">Ubiquinone</keyword>
<proteinExistence type="inferred from homology"/>
<feature type="chain" id="PRO_0000061066" description="Cytochrome b">
    <location>
        <begin position="1"/>
        <end position="381"/>
    </location>
</feature>
<feature type="transmembrane region" description="Helical" evidence="2">
    <location>
        <begin position="33"/>
        <end position="53"/>
    </location>
</feature>
<feature type="transmembrane region" description="Helical" evidence="2">
    <location>
        <begin position="77"/>
        <end position="98"/>
    </location>
</feature>
<feature type="transmembrane region" description="Helical" evidence="2">
    <location>
        <begin position="113"/>
        <end position="133"/>
    </location>
</feature>
<feature type="transmembrane region" description="Helical" evidence="2">
    <location>
        <begin position="178"/>
        <end position="198"/>
    </location>
</feature>
<feature type="transmembrane region" description="Helical" evidence="2">
    <location>
        <begin position="226"/>
        <end position="246"/>
    </location>
</feature>
<feature type="transmembrane region" description="Helical" evidence="2">
    <location>
        <begin position="288"/>
        <end position="308"/>
    </location>
</feature>
<feature type="transmembrane region" description="Helical" evidence="2">
    <location>
        <begin position="320"/>
        <end position="340"/>
    </location>
</feature>
<feature type="transmembrane region" description="Helical" evidence="2">
    <location>
        <begin position="347"/>
        <end position="367"/>
    </location>
</feature>
<feature type="binding site" description="axial binding residue" evidence="2">
    <location>
        <position position="83"/>
    </location>
    <ligand>
        <name>heme b</name>
        <dbReference type="ChEBI" id="CHEBI:60344"/>
        <label>b562</label>
    </ligand>
    <ligandPart>
        <name>Fe</name>
        <dbReference type="ChEBI" id="CHEBI:18248"/>
    </ligandPart>
</feature>
<feature type="binding site" description="axial binding residue" evidence="2">
    <location>
        <position position="97"/>
    </location>
    <ligand>
        <name>heme b</name>
        <dbReference type="ChEBI" id="CHEBI:60344"/>
        <label>b566</label>
    </ligand>
    <ligandPart>
        <name>Fe</name>
        <dbReference type="ChEBI" id="CHEBI:18248"/>
    </ligandPart>
</feature>
<feature type="binding site" description="axial binding residue" evidence="2">
    <location>
        <position position="182"/>
    </location>
    <ligand>
        <name>heme b</name>
        <dbReference type="ChEBI" id="CHEBI:60344"/>
        <label>b562</label>
    </ligand>
    <ligandPart>
        <name>Fe</name>
        <dbReference type="ChEBI" id="CHEBI:18248"/>
    </ligandPart>
</feature>
<feature type="binding site" description="axial binding residue" evidence="2">
    <location>
        <position position="196"/>
    </location>
    <ligand>
        <name>heme b</name>
        <dbReference type="ChEBI" id="CHEBI:60344"/>
        <label>b566</label>
    </ligand>
    <ligandPart>
        <name>Fe</name>
        <dbReference type="ChEBI" id="CHEBI:18248"/>
    </ligandPart>
</feature>
<feature type="binding site" evidence="2">
    <location>
        <position position="201"/>
    </location>
    <ligand>
        <name>a ubiquinone</name>
        <dbReference type="ChEBI" id="CHEBI:16389"/>
    </ligand>
</feature>